<protein>
    <recommendedName>
        <fullName>Endoglucanase</fullName>
        <ecNumber>3.2.1.4</ecNumber>
    </recommendedName>
    <alternativeName>
        <fullName>Cellulase</fullName>
    </alternativeName>
    <alternativeName>
        <fullName>Endo-1,4-beta-glucanase</fullName>
    </alternativeName>
</protein>
<organism>
    <name type="scientific">Paenibacillus polymyxa</name>
    <name type="common">Bacillus polymyxa</name>
    <dbReference type="NCBI Taxonomy" id="1406"/>
    <lineage>
        <taxon>Bacteria</taxon>
        <taxon>Bacillati</taxon>
        <taxon>Bacillota</taxon>
        <taxon>Bacilli</taxon>
        <taxon>Bacillales</taxon>
        <taxon>Paenibacillaceae</taxon>
        <taxon>Paenibacillus</taxon>
    </lineage>
</organism>
<proteinExistence type="inferred from homology"/>
<accession>P23548</accession>
<dbReference type="EC" id="3.2.1.4"/>
<dbReference type="EMBL" id="M33791">
    <property type="protein sequence ID" value="AAA22631.1"/>
    <property type="molecule type" value="Genomic_DNA"/>
</dbReference>
<dbReference type="PIR" id="A35136">
    <property type="entry name" value="A35136"/>
</dbReference>
<dbReference type="SMR" id="P23548"/>
<dbReference type="CAZy" id="GH5">
    <property type="family name" value="Glycoside Hydrolase Family 5"/>
</dbReference>
<dbReference type="eggNOG" id="COG2730">
    <property type="taxonomic scope" value="Bacteria"/>
</dbReference>
<dbReference type="GO" id="GO:0008810">
    <property type="term" value="F:cellulase activity"/>
    <property type="evidence" value="ECO:0007669"/>
    <property type="project" value="UniProtKB-EC"/>
</dbReference>
<dbReference type="GO" id="GO:0030245">
    <property type="term" value="P:cellulose catabolic process"/>
    <property type="evidence" value="ECO:0007669"/>
    <property type="project" value="UniProtKB-KW"/>
</dbReference>
<dbReference type="Gene3D" id="3.20.20.80">
    <property type="entry name" value="Glycosidases"/>
    <property type="match status" value="1"/>
</dbReference>
<dbReference type="InterPro" id="IPR001547">
    <property type="entry name" value="Glyco_hydro_5"/>
</dbReference>
<dbReference type="InterPro" id="IPR018087">
    <property type="entry name" value="Glyco_hydro_5_CS"/>
</dbReference>
<dbReference type="InterPro" id="IPR017853">
    <property type="entry name" value="Glycoside_hydrolase_SF"/>
</dbReference>
<dbReference type="PANTHER" id="PTHR35923:SF2">
    <property type="entry name" value="ENDOGLUCANASE"/>
    <property type="match status" value="1"/>
</dbReference>
<dbReference type="PANTHER" id="PTHR35923">
    <property type="entry name" value="MAJOR EXTRACELLULAR ENDOGLUCANASE"/>
    <property type="match status" value="1"/>
</dbReference>
<dbReference type="Pfam" id="PF00150">
    <property type="entry name" value="Cellulase"/>
    <property type="match status" value="1"/>
</dbReference>
<dbReference type="SUPFAM" id="SSF51445">
    <property type="entry name" value="(Trans)glycosidases"/>
    <property type="match status" value="1"/>
</dbReference>
<dbReference type="PROSITE" id="PS00659">
    <property type="entry name" value="GLYCOSYL_HYDROL_F5"/>
    <property type="match status" value="1"/>
</dbReference>
<reference key="1">
    <citation type="journal article" date="1990" name="J. Bacteriol.">
        <title>Molecular cloning, expression, and characterization of endo-beta-1,4-glucanase genes from Bacillus polymyxa and Bacillus circulans.</title>
        <authorList>
            <person name="Baird S.D."/>
            <person name="Johnson D.A."/>
            <person name="Seligy V.L."/>
        </authorList>
    </citation>
    <scope>NUCLEOTIDE SEQUENCE [GENOMIC DNA]</scope>
</reference>
<feature type="chain" id="PRO_0000184042" description="Endoglucanase">
    <location>
        <begin position="1"/>
        <end position="397"/>
    </location>
</feature>
<feature type="active site" description="Proton donor" evidence="1">
    <location>
        <position position="194"/>
    </location>
</feature>
<feature type="active site" description="Nucleophile" evidence="1">
    <location>
        <position position="317"/>
    </location>
</feature>
<sequence length="397" mass="44357">MKKKGLKKTFFVIASLVMGFTLYGYTPVSADAASVKGYYHTQGNKIVDESGKEAAFNGLNWFGLETPNYTLHGLWSRSMDDMLDQVKKEGYNLIRLPYSNQLFDSSSRPDSIDYHKNPDLVGLNPIQIMDKLIEKAGQRGIQIILDRHRPGSGGQSELWYTSQYPESRWISDWKMLADRYKNNPTVIGADLHNEPHGQASWGTGNASTDWRLAAQRAGNAILSVNPNWLILVEGVDHNVQGNNSQYWWGGNLTGVANYPVVLDVPNRVVYSPHDYGPGVSSQPWFNDPAFPSNLPAIWDQTWGYISKQNIAPVLVGEFGGRNVDLSCPEGKWQNALVHYIGANNLYFTYWSLNPNSGDTGGLLLDDWTTWNRPKQDMLGRIMKPVVSVAQQAEAAAE</sequence>
<name>GUN_PAEPO</name>
<comment type="catalytic activity">
    <reaction>
        <text>Endohydrolysis of (1-&gt;4)-beta-D-glucosidic linkages in cellulose, lichenin and cereal beta-D-glucans.</text>
        <dbReference type="EC" id="3.2.1.4"/>
    </reaction>
</comment>
<comment type="similarity">
    <text evidence="2">Belongs to the glycosyl hydrolase 5 (cellulase A) family.</text>
</comment>
<keyword id="KW-0119">Carbohydrate metabolism</keyword>
<keyword id="KW-0136">Cellulose degradation</keyword>
<keyword id="KW-0326">Glycosidase</keyword>
<keyword id="KW-0378">Hydrolase</keyword>
<keyword id="KW-0624">Polysaccharide degradation</keyword>
<evidence type="ECO:0000250" key="1"/>
<evidence type="ECO:0000305" key="2"/>